<protein>
    <recommendedName>
        <fullName evidence="1">4-diphosphocytidyl-2-C-methyl-D-erythritol kinase</fullName>
        <shortName evidence="1">CMK</shortName>
        <ecNumber evidence="1">2.7.1.148</ecNumber>
    </recommendedName>
    <alternativeName>
        <fullName evidence="1">4-(cytidine-5'-diphospho)-2-C-methyl-D-erythritol kinase</fullName>
    </alternativeName>
</protein>
<name>ISPE_NEIMB</name>
<reference key="1">
    <citation type="journal article" date="2000" name="Science">
        <title>Complete genome sequence of Neisseria meningitidis serogroup B strain MC58.</title>
        <authorList>
            <person name="Tettelin H."/>
            <person name="Saunders N.J."/>
            <person name="Heidelberg J.F."/>
            <person name="Jeffries A.C."/>
            <person name="Nelson K.E."/>
            <person name="Eisen J.A."/>
            <person name="Ketchum K.A."/>
            <person name="Hood D.W."/>
            <person name="Peden J.F."/>
            <person name="Dodson R.J."/>
            <person name="Nelson W.C."/>
            <person name="Gwinn M.L."/>
            <person name="DeBoy R.T."/>
            <person name="Peterson J.D."/>
            <person name="Hickey E.K."/>
            <person name="Haft D.H."/>
            <person name="Salzberg S.L."/>
            <person name="White O."/>
            <person name="Fleischmann R.D."/>
            <person name="Dougherty B.A."/>
            <person name="Mason T.M."/>
            <person name="Ciecko A."/>
            <person name="Parksey D.S."/>
            <person name="Blair E."/>
            <person name="Cittone H."/>
            <person name="Clark E.B."/>
            <person name="Cotton M.D."/>
            <person name="Utterback T.R."/>
            <person name="Khouri H.M."/>
            <person name="Qin H."/>
            <person name="Vamathevan J.J."/>
            <person name="Gill J."/>
            <person name="Scarlato V."/>
            <person name="Masignani V."/>
            <person name="Pizza M."/>
            <person name="Grandi G."/>
            <person name="Sun L."/>
            <person name="Smith H.O."/>
            <person name="Fraser C.M."/>
            <person name="Moxon E.R."/>
            <person name="Rappuoli R."/>
            <person name="Venter J.C."/>
        </authorList>
    </citation>
    <scope>NUCLEOTIDE SEQUENCE [LARGE SCALE GENOMIC DNA]</scope>
    <source>
        <strain>ATCC BAA-335 / MC58</strain>
    </source>
</reference>
<proteinExistence type="inferred from homology"/>
<accession>Q9JZW4</accession>
<sequence length="281" mass="31316">MNIADGRQAFSAPAKLNLDLRITGRREDGYHNIESIFCLIDLQDTVYLKPRDDGKIILHNPVDGMPQEVDLSYRAASLLQKYARNPAGVEIWLDKKIPTGAGLGGGSSDAATVLLVLNRWWQCGLTQRQLIDSGAALGADVPFFIFGKNAFARGIGDRLDEMDIPKQWYVIVKPPVHVSTAKIFTHESLTRNSASSIMPTFQNLQPFRNDMQAVVFKEYPEVWKAYSELSRYGFALMTGSGACVFTACQDRNSAYNIYRQVSDLYEAYLAEGLSKHPLLSV</sequence>
<feature type="chain" id="PRO_0000189238" description="4-diphosphocytidyl-2-C-methyl-D-erythritol kinase">
    <location>
        <begin position="1"/>
        <end position="281"/>
    </location>
</feature>
<feature type="active site" evidence="1">
    <location>
        <position position="15"/>
    </location>
</feature>
<feature type="active site" evidence="1">
    <location>
        <position position="140"/>
    </location>
</feature>
<feature type="binding site" evidence="1">
    <location>
        <begin position="98"/>
        <end position="108"/>
    </location>
    <ligand>
        <name>ATP</name>
        <dbReference type="ChEBI" id="CHEBI:30616"/>
    </ligand>
</feature>
<keyword id="KW-0067">ATP-binding</keyword>
<keyword id="KW-0414">Isoprene biosynthesis</keyword>
<keyword id="KW-0418">Kinase</keyword>
<keyword id="KW-0547">Nucleotide-binding</keyword>
<keyword id="KW-1185">Reference proteome</keyword>
<keyword id="KW-0808">Transferase</keyword>
<evidence type="ECO:0000255" key="1">
    <source>
        <dbReference type="HAMAP-Rule" id="MF_00061"/>
    </source>
</evidence>
<dbReference type="EC" id="2.7.1.148" evidence="1"/>
<dbReference type="EMBL" id="AE002098">
    <property type="protein sequence ID" value="AAF41285.1"/>
    <property type="molecule type" value="Genomic_DNA"/>
</dbReference>
<dbReference type="PIR" id="B81149">
    <property type="entry name" value="B81149"/>
</dbReference>
<dbReference type="RefSeq" id="NP_273915.1">
    <property type="nucleotide sequence ID" value="NC_003112.2"/>
</dbReference>
<dbReference type="RefSeq" id="WP_002222667.1">
    <property type="nucleotide sequence ID" value="NC_003112.2"/>
</dbReference>
<dbReference type="SMR" id="Q9JZW4"/>
<dbReference type="FunCoup" id="Q9JZW4">
    <property type="interactions" value="274"/>
</dbReference>
<dbReference type="STRING" id="122586.NMB0874"/>
<dbReference type="PaxDb" id="122586-NMB0874"/>
<dbReference type="KEGG" id="nme:NMB0874"/>
<dbReference type="PATRIC" id="fig|122586.8.peg.1090"/>
<dbReference type="HOGENOM" id="CLU_053057_3_0_4"/>
<dbReference type="InParanoid" id="Q9JZW4"/>
<dbReference type="OrthoDB" id="9809438at2"/>
<dbReference type="UniPathway" id="UPA00056">
    <property type="reaction ID" value="UER00094"/>
</dbReference>
<dbReference type="Proteomes" id="UP000000425">
    <property type="component" value="Chromosome"/>
</dbReference>
<dbReference type="GO" id="GO:0050515">
    <property type="term" value="F:4-(cytidine 5'-diphospho)-2-C-methyl-D-erythritol kinase activity"/>
    <property type="evidence" value="ECO:0000318"/>
    <property type="project" value="GO_Central"/>
</dbReference>
<dbReference type="GO" id="GO:0005524">
    <property type="term" value="F:ATP binding"/>
    <property type="evidence" value="ECO:0007669"/>
    <property type="project" value="UniProtKB-UniRule"/>
</dbReference>
<dbReference type="GO" id="GO:0019288">
    <property type="term" value="P:isopentenyl diphosphate biosynthetic process, methylerythritol 4-phosphate pathway"/>
    <property type="evidence" value="ECO:0007669"/>
    <property type="project" value="UniProtKB-UniRule"/>
</dbReference>
<dbReference type="GO" id="GO:0016114">
    <property type="term" value="P:terpenoid biosynthetic process"/>
    <property type="evidence" value="ECO:0007669"/>
    <property type="project" value="InterPro"/>
</dbReference>
<dbReference type="FunFam" id="3.30.230.10:FF:000108">
    <property type="entry name" value="4-diphosphocytidyl-2-C-methyl-D-erythritol kinase"/>
    <property type="match status" value="1"/>
</dbReference>
<dbReference type="FunFam" id="3.30.70.890:FF:000021">
    <property type="entry name" value="4-diphosphocytidyl-2-C-methyl-D-erythritol kinase"/>
    <property type="match status" value="1"/>
</dbReference>
<dbReference type="Gene3D" id="3.30.230.10">
    <property type="match status" value="1"/>
</dbReference>
<dbReference type="Gene3D" id="3.30.70.890">
    <property type="entry name" value="GHMP kinase, C-terminal domain"/>
    <property type="match status" value="1"/>
</dbReference>
<dbReference type="HAMAP" id="MF_00061">
    <property type="entry name" value="IspE"/>
    <property type="match status" value="1"/>
</dbReference>
<dbReference type="InterPro" id="IPR013750">
    <property type="entry name" value="GHMP_kinase_C_dom"/>
</dbReference>
<dbReference type="InterPro" id="IPR036554">
    <property type="entry name" value="GHMP_kinase_C_sf"/>
</dbReference>
<dbReference type="InterPro" id="IPR006204">
    <property type="entry name" value="GHMP_kinase_N_dom"/>
</dbReference>
<dbReference type="InterPro" id="IPR004424">
    <property type="entry name" value="IspE"/>
</dbReference>
<dbReference type="InterPro" id="IPR020568">
    <property type="entry name" value="Ribosomal_Su5_D2-typ_SF"/>
</dbReference>
<dbReference type="InterPro" id="IPR014721">
    <property type="entry name" value="Ribsml_uS5_D2-typ_fold_subgr"/>
</dbReference>
<dbReference type="NCBIfam" id="TIGR00154">
    <property type="entry name" value="ispE"/>
    <property type="match status" value="1"/>
</dbReference>
<dbReference type="PANTHER" id="PTHR43527">
    <property type="entry name" value="4-DIPHOSPHOCYTIDYL-2-C-METHYL-D-ERYTHRITOL KINASE, CHLOROPLASTIC"/>
    <property type="match status" value="1"/>
</dbReference>
<dbReference type="PANTHER" id="PTHR43527:SF2">
    <property type="entry name" value="4-DIPHOSPHOCYTIDYL-2-C-METHYL-D-ERYTHRITOL KINASE, CHLOROPLASTIC"/>
    <property type="match status" value="1"/>
</dbReference>
<dbReference type="Pfam" id="PF08544">
    <property type="entry name" value="GHMP_kinases_C"/>
    <property type="match status" value="1"/>
</dbReference>
<dbReference type="Pfam" id="PF00288">
    <property type="entry name" value="GHMP_kinases_N"/>
    <property type="match status" value="1"/>
</dbReference>
<dbReference type="PIRSF" id="PIRSF010376">
    <property type="entry name" value="IspE"/>
    <property type="match status" value="1"/>
</dbReference>
<dbReference type="SUPFAM" id="SSF55060">
    <property type="entry name" value="GHMP Kinase, C-terminal domain"/>
    <property type="match status" value="1"/>
</dbReference>
<dbReference type="SUPFAM" id="SSF54211">
    <property type="entry name" value="Ribosomal protein S5 domain 2-like"/>
    <property type="match status" value="1"/>
</dbReference>
<gene>
    <name evidence="1" type="primary">ispE</name>
    <name type="ordered locus">NMB0874</name>
</gene>
<comment type="function">
    <text evidence="1">Catalyzes the phosphorylation of the position 2 hydroxy group of 4-diphosphocytidyl-2C-methyl-D-erythritol.</text>
</comment>
<comment type="catalytic activity">
    <reaction evidence="1">
        <text>4-CDP-2-C-methyl-D-erythritol + ATP = 4-CDP-2-C-methyl-D-erythritol 2-phosphate + ADP + H(+)</text>
        <dbReference type="Rhea" id="RHEA:18437"/>
        <dbReference type="ChEBI" id="CHEBI:15378"/>
        <dbReference type="ChEBI" id="CHEBI:30616"/>
        <dbReference type="ChEBI" id="CHEBI:57823"/>
        <dbReference type="ChEBI" id="CHEBI:57919"/>
        <dbReference type="ChEBI" id="CHEBI:456216"/>
        <dbReference type="EC" id="2.7.1.148"/>
    </reaction>
</comment>
<comment type="pathway">
    <text evidence="1">Isoprenoid biosynthesis; isopentenyl diphosphate biosynthesis via DXP pathway; isopentenyl diphosphate from 1-deoxy-D-xylulose 5-phosphate: step 3/6.</text>
</comment>
<comment type="similarity">
    <text evidence="1">Belongs to the GHMP kinase family. IspE subfamily.</text>
</comment>
<organism>
    <name type="scientific">Neisseria meningitidis serogroup B (strain ATCC BAA-335 / MC58)</name>
    <dbReference type="NCBI Taxonomy" id="122586"/>
    <lineage>
        <taxon>Bacteria</taxon>
        <taxon>Pseudomonadati</taxon>
        <taxon>Pseudomonadota</taxon>
        <taxon>Betaproteobacteria</taxon>
        <taxon>Neisseriales</taxon>
        <taxon>Neisseriaceae</taxon>
        <taxon>Neisseria</taxon>
    </lineage>
</organism>